<accession>B7UMJ6</accession>
<gene>
    <name evidence="1" type="primary">atpC</name>
    <name type="ordered locus">E2348C_4041</name>
</gene>
<reference key="1">
    <citation type="journal article" date="2009" name="J. Bacteriol.">
        <title>Complete genome sequence and comparative genome analysis of enteropathogenic Escherichia coli O127:H6 strain E2348/69.</title>
        <authorList>
            <person name="Iguchi A."/>
            <person name="Thomson N.R."/>
            <person name="Ogura Y."/>
            <person name="Saunders D."/>
            <person name="Ooka T."/>
            <person name="Henderson I.R."/>
            <person name="Harris D."/>
            <person name="Asadulghani M."/>
            <person name="Kurokawa K."/>
            <person name="Dean P."/>
            <person name="Kenny B."/>
            <person name="Quail M.A."/>
            <person name="Thurston S."/>
            <person name="Dougan G."/>
            <person name="Hayashi T."/>
            <person name="Parkhill J."/>
            <person name="Frankel G."/>
        </authorList>
    </citation>
    <scope>NUCLEOTIDE SEQUENCE [LARGE SCALE GENOMIC DNA]</scope>
    <source>
        <strain>E2348/69 / EPEC</strain>
    </source>
</reference>
<protein>
    <recommendedName>
        <fullName evidence="1">ATP synthase epsilon chain</fullName>
    </recommendedName>
    <alternativeName>
        <fullName evidence="1">ATP synthase F1 sector epsilon subunit</fullName>
    </alternativeName>
    <alternativeName>
        <fullName evidence="1">F-ATPase epsilon subunit</fullName>
    </alternativeName>
</protein>
<comment type="function">
    <text evidence="1">Produces ATP from ADP in the presence of a proton gradient across the membrane.</text>
</comment>
<comment type="subunit">
    <text evidence="1">F-type ATPases have 2 components, CF(1) - the catalytic core - and CF(0) - the membrane proton channel. CF(1) has five subunits: alpha(3), beta(3), gamma(1), delta(1), epsilon(1). CF(0) has three main subunits: a, b and c.</text>
</comment>
<comment type="subcellular location">
    <subcellularLocation>
        <location evidence="1">Cell inner membrane</location>
        <topology evidence="1">Peripheral membrane protein</topology>
    </subcellularLocation>
</comment>
<comment type="similarity">
    <text evidence="1">Belongs to the ATPase epsilon chain family.</text>
</comment>
<name>ATPE_ECO27</name>
<keyword id="KW-0066">ATP synthesis</keyword>
<keyword id="KW-0997">Cell inner membrane</keyword>
<keyword id="KW-1003">Cell membrane</keyword>
<keyword id="KW-0139">CF(1)</keyword>
<keyword id="KW-0375">Hydrogen ion transport</keyword>
<keyword id="KW-0406">Ion transport</keyword>
<keyword id="KW-0472">Membrane</keyword>
<keyword id="KW-1185">Reference proteome</keyword>
<keyword id="KW-0813">Transport</keyword>
<organism>
    <name type="scientific">Escherichia coli O127:H6 (strain E2348/69 / EPEC)</name>
    <dbReference type="NCBI Taxonomy" id="574521"/>
    <lineage>
        <taxon>Bacteria</taxon>
        <taxon>Pseudomonadati</taxon>
        <taxon>Pseudomonadota</taxon>
        <taxon>Gammaproteobacteria</taxon>
        <taxon>Enterobacterales</taxon>
        <taxon>Enterobacteriaceae</taxon>
        <taxon>Escherichia</taxon>
    </lineage>
</organism>
<evidence type="ECO:0000255" key="1">
    <source>
        <dbReference type="HAMAP-Rule" id="MF_00530"/>
    </source>
</evidence>
<proteinExistence type="inferred from homology"/>
<dbReference type="EMBL" id="FM180568">
    <property type="protein sequence ID" value="CAS11589.1"/>
    <property type="molecule type" value="Genomic_DNA"/>
</dbReference>
<dbReference type="RefSeq" id="WP_001251965.1">
    <property type="nucleotide sequence ID" value="NC_011601.1"/>
</dbReference>
<dbReference type="SMR" id="B7UMJ6"/>
<dbReference type="KEGG" id="ecg:E2348C_4041"/>
<dbReference type="HOGENOM" id="CLU_084338_2_0_6"/>
<dbReference type="Proteomes" id="UP000008205">
    <property type="component" value="Chromosome"/>
</dbReference>
<dbReference type="GO" id="GO:0005886">
    <property type="term" value="C:plasma membrane"/>
    <property type="evidence" value="ECO:0007669"/>
    <property type="project" value="UniProtKB-SubCell"/>
</dbReference>
<dbReference type="GO" id="GO:0045259">
    <property type="term" value="C:proton-transporting ATP synthase complex"/>
    <property type="evidence" value="ECO:0007669"/>
    <property type="project" value="UniProtKB-KW"/>
</dbReference>
<dbReference type="GO" id="GO:0005524">
    <property type="term" value="F:ATP binding"/>
    <property type="evidence" value="ECO:0007669"/>
    <property type="project" value="UniProtKB-UniRule"/>
</dbReference>
<dbReference type="GO" id="GO:0046933">
    <property type="term" value="F:proton-transporting ATP synthase activity, rotational mechanism"/>
    <property type="evidence" value="ECO:0007669"/>
    <property type="project" value="UniProtKB-UniRule"/>
</dbReference>
<dbReference type="CDD" id="cd12152">
    <property type="entry name" value="F1-ATPase_delta"/>
    <property type="match status" value="1"/>
</dbReference>
<dbReference type="FunFam" id="1.20.5.440:FF:000001">
    <property type="entry name" value="ATP synthase epsilon chain"/>
    <property type="match status" value="1"/>
</dbReference>
<dbReference type="FunFam" id="2.60.15.10:FF:000001">
    <property type="entry name" value="ATP synthase epsilon chain"/>
    <property type="match status" value="1"/>
</dbReference>
<dbReference type="Gene3D" id="1.20.5.440">
    <property type="entry name" value="ATP synthase delta/epsilon subunit, C-terminal domain"/>
    <property type="match status" value="1"/>
</dbReference>
<dbReference type="Gene3D" id="2.60.15.10">
    <property type="entry name" value="F0F1 ATP synthase delta/epsilon subunit, N-terminal"/>
    <property type="match status" value="1"/>
</dbReference>
<dbReference type="HAMAP" id="MF_00530">
    <property type="entry name" value="ATP_synth_epsil_bac"/>
    <property type="match status" value="1"/>
</dbReference>
<dbReference type="InterPro" id="IPR036794">
    <property type="entry name" value="ATP_F1_dsu/esu_C_sf"/>
</dbReference>
<dbReference type="InterPro" id="IPR001469">
    <property type="entry name" value="ATP_synth_F1_dsu/esu"/>
</dbReference>
<dbReference type="InterPro" id="IPR020546">
    <property type="entry name" value="ATP_synth_F1_dsu/esu_N"/>
</dbReference>
<dbReference type="InterPro" id="IPR020547">
    <property type="entry name" value="ATP_synth_F1_esu_C"/>
</dbReference>
<dbReference type="InterPro" id="IPR036771">
    <property type="entry name" value="ATPsynth_dsu/esu_N"/>
</dbReference>
<dbReference type="NCBIfam" id="TIGR01216">
    <property type="entry name" value="ATP_synt_epsi"/>
    <property type="match status" value="1"/>
</dbReference>
<dbReference type="NCBIfam" id="NF001847">
    <property type="entry name" value="PRK00571.1-4"/>
    <property type="match status" value="1"/>
</dbReference>
<dbReference type="PANTHER" id="PTHR13822">
    <property type="entry name" value="ATP SYNTHASE DELTA/EPSILON CHAIN"/>
    <property type="match status" value="1"/>
</dbReference>
<dbReference type="PANTHER" id="PTHR13822:SF10">
    <property type="entry name" value="ATP SYNTHASE EPSILON CHAIN, CHLOROPLASTIC"/>
    <property type="match status" value="1"/>
</dbReference>
<dbReference type="Pfam" id="PF00401">
    <property type="entry name" value="ATP-synt_DE"/>
    <property type="match status" value="1"/>
</dbReference>
<dbReference type="Pfam" id="PF02823">
    <property type="entry name" value="ATP-synt_DE_N"/>
    <property type="match status" value="1"/>
</dbReference>
<dbReference type="SUPFAM" id="SSF46604">
    <property type="entry name" value="Epsilon subunit of F1F0-ATP synthase C-terminal domain"/>
    <property type="match status" value="1"/>
</dbReference>
<dbReference type="SUPFAM" id="SSF51344">
    <property type="entry name" value="Epsilon subunit of F1F0-ATP synthase N-terminal domain"/>
    <property type="match status" value="1"/>
</dbReference>
<sequence>MAMTYHLDVVSAEQQMFSGLVEKIQVTGSEGELGIYPGHAPLLTAIKPGMIRIVKQHGHEEFIYLSGGILEVQPGNVTVLADTAIRGQDLDEARAMEAKRKAEEHISSSHGDVDYAQASAELAKAIAQLRVIELTKKAM</sequence>
<feature type="chain" id="PRO_1000146327" description="ATP synthase epsilon chain">
    <location>
        <begin position="1"/>
        <end position="139"/>
    </location>
</feature>